<reference key="1">
    <citation type="journal article" date="1999" name="Nature">
        <title>Sequence and analysis of chromosome 4 of the plant Arabidopsis thaliana.</title>
        <authorList>
            <person name="Mayer K.F.X."/>
            <person name="Schueller C."/>
            <person name="Wambutt R."/>
            <person name="Murphy G."/>
            <person name="Volckaert G."/>
            <person name="Pohl T."/>
            <person name="Duesterhoeft A."/>
            <person name="Stiekema W."/>
            <person name="Entian K.-D."/>
            <person name="Terryn N."/>
            <person name="Harris B."/>
            <person name="Ansorge W."/>
            <person name="Brandt P."/>
            <person name="Grivell L.A."/>
            <person name="Rieger M."/>
            <person name="Weichselgartner M."/>
            <person name="de Simone V."/>
            <person name="Obermaier B."/>
            <person name="Mache R."/>
            <person name="Mueller M."/>
            <person name="Kreis M."/>
            <person name="Delseny M."/>
            <person name="Puigdomenech P."/>
            <person name="Watson M."/>
            <person name="Schmidtheini T."/>
            <person name="Reichert B."/>
            <person name="Portetelle D."/>
            <person name="Perez-Alonso M."/>
            <person name="Boutry M."/>
            <person name="Bancroft I."/>
            <person name="Vos P."/>
            <person name="Hoheisel J."/>
            <person name="Zimmermann W."/>
            <person name="Wedler H."/>
            <person name="Ridley P."/>
            <person name="Langham S.-A."/>
            <person name="McCullagh B."/>
            <person name="Bilham L."/>
            <person name="Robben J."/>
            <person name="van der Schueren J."/>
            <person name="Grymonprez B."/>
            <person name="Chuang Y.-J."/>
            <person name="Vandenbussche F."/>
            <person name="Braeken M."/>
            <person name="Weltjens I."/>
            <person name="Voet M."/>
            <person name="Bastiaens I."/>
            <person name="Aert R."/>
            <person name="Defoor E."/>
            <person name="Weitzenegger T."/>
            <person name="Bothe G."/>
            <person name="Ramsperger U."/>
            <person name="Hilbert H."/>
            <person name="Braun M."/>
            <person name="Holzer E."/>
            <person name="Brandt A."/>
            <person name="Peters S."/>
            <person name="van Staveren M."/>
            <person name="Dirkse W."/>
            <person name="Mooijman P."/>
            <person name="Klein Lankhorst R."/>
            <person name="Rose M."/>
            <person name="Hauf J."/>
            <person name="Koetter P."/>
            <person name="Berneiser S."/>
            <person name="Hempel S."/>
            <person name="Feldpausch M."/>
            <person name="Lamberth S."/>
            <person name="Van den Daele H."/>
            <person name="De Keyser A."/>
            <person name="Buysshaert C."/>
            <person name="Gielen J."/>
            <person name="Villarroel R."/>
            <person name="De Clercq R."/>
            <person name="van Montagu M."/>
            <person name="Rogers J."/>
            <person name="Cronin A."/>
            <person name="Quail M.A."/>
            <person name="Bray-Allen S."/>
            <person name="Clark L."/>
            <person name="Doggett J."/>
            <person name="Hall S."/>
            <person name="Kay M."/>
            <person name="Lennard N."/>
            <person name="McLay K."/>
            <person name="Mayes R."/>
            <person name="Pettett A."/>
            <person name="Rajandream M.A."/>
            <person name="Lyne M."/>
            <person name="Benes V."/>
            <person name="Rechmann S."/>
            <person name="Borkova D."/>
            <person name="Bloecker H."/>
            <person name="Scharfe M."/>
            <person name="Grimm M."/>
            <person name="Loehnert T.-H."/>
            <person name="Dose S."/>
            <person name="de Haan M."/>
            <person name="Maarse A.C."/>
            <person name="Schaefer M."/>
            <person name="Mueller-Auer S."/>
            <person name="Gabel C."/>
            <person name="Fuchs M."/>
            <person name="Fartmann B."/>
            <person name="Granderath K."/>
            <person name="Dauner D."/>
            <person name="Herzl A."/>
            <person name="Neumann S."/>
            <person name="Argiriou A."/>
            <person name="Vitale D."/>
            <person name="Liguori R."/>
            <person name="Piravandi E."/>
            <person name="Massenet O."/>
            <person name="Quigley F."/>
            <person name="Clabauld G."/>
            <person name="Muendlein A."/>
            <person name="Felber R."/>
            <person name="Schnabl S."/>
            <person name="Hiller R."/>
            <person name="Schmidt W."/>
            <person name="Lecharny A."/>
            <person name="Aubourg S."/>
            <person name="Chefdor F."/>
            <person name="Cooke R."/>
            <person name="Berger C."/>
            <person name="Monfort A."/>
            <person name="Casacuberta E."/>
            <person name="Gibbons T."/>
            <person name="Weber N."/>
            <person name="Vandenbol M."/>
            <person name="Bargues M."/>
            <person name="Terol J."/>
            <person name="Torres A."/>
            <person name="Perez-Perez A."/>
            <person name="Purnelle B."/>
            <person name="Bent E."/>
            <person name="Johnson S."/>
            <person name="Tacon D."/>
            <person name="Jesse T."/>
            <person name="Heijnen L."/>
            <person name="Schwarz S."/>
            <person name="Scholler P."/>
            <person name="Heber S."/>
            <person name="Francs P."/>
            <person name="Bielke C."/>
            <person name="Frishman D."/>
            <person name="Haase D."/>
            <person name="Lemcke K."/>
            <person name="Mewes H.-W."/>
            <person name="Stocker S."/>
            <person name="Zaccaria P."/>
            <person name="Bevan M."/>
            <person name="Wilson R.K."/>
            <person name="de la Bastide M."/>
            <person name="Habermann K."/>
            <person name="Parnell L."/>
            <person name="Dedhia N."/>
            <person name="Gnoj L."/>
            <person name="Schutz K."/>
            <person name="Huang E."/>
            <person name="Spiegel L."/>
            <person name="Sekhon M."/>
            <person name="Murray J."/>
            <person name="Sheet P."/>
            <person name="Cordes M."/>
            <person name="Abu-Threideh J."/>
            <person name="Stoneking T."/>
            <person name="Kalicki J."/>
            <person name="Graves T."/>
            <person name="Harmon G."/>
            <person name="Edwards J."/>
            <person name="Latreille P."/>
            <person name="Courtney L."/>
            <person name="Cloud J."/>
            <person name="Abbott A."/>
            <person name="Scott K."/>
            <person name="Johnson D."/>
            <person name="Minx P."/>
            <person name="Bentley D."/>
            <person name="Fulton B."/>
            <person name="Miller N."/>
            <person name="Greco T."/>
            <person name="Kemp K."/>
            <person name="Kramer J."/>
            <person name="Fulton L."/>
            <person name="Mardis E."/>
            <person name="Dante M."/>
            <person name="Pepin K."/>
            <person name="Hillier L.W."/>
            <person name="Nelson J."/>
            <person name="Spieth J."/>
            <person name="Ryan E."/>
            <person name="Andrews S."/>
            <person name="Geisel C."/>
            <person name="Layman D."/>
            <person name="Du H."/>
            <person name="Ali J."/>
            <person name="Berghoff A."/>
            <person name="Jones K."/>
            <person name="Drone K."/>
            <person name="Cotton M."/>
            <person name="Joshu C."/>
            <person name="Antonoiu B."/>
            <person name="Zidanic M."/>
            <person name="Strong C."/>
            <person name="Sun H."/>
            <person name="Lamar B."/>
            <person name="Yordan C."/>
            <person name="Ma P."/>
            <person name="Zhong J."/>
            <person name="Preston R."/>
            <person name="Vil D."/>
            <person name="Shekher M."/>
            <person name="Matero A."/>
            <person name="Shah R."/>
            <person name="Swaby I.K."/>
            <person name="O'Shaughnessy A."/>
            <person name="Rodriguez M."/>
            <person name="Hoffman J."/>
            <person name="Till S."/>
            <person name="Granat S."/>
            <person name="Shohdy N."/>
            <person name="Hasegawa A."/>
            <person name="Hameed A."/>
            <person name="Lodhi M."/>
            <person name="Johnson A."/>
            <person name="Chen E."/>
            <person name="Marra M.A."/>
            <person name="Martienssen R."/>
            <person name="McCombie W.R."/>
        </authorList>
    </citation>
    <scope>NUCLEOTIDE SEQUENCE [LARGE SCALE GENOMIC DNA]</scope>
    <source>
        <strain>cv. Columbia</strain>
    </source>
</reference>
<reference key="2">
    <citation type="journal article" date="2017" name="Plant J.">
        <title>Araport11: a complete reannotation of the Arabidopsis thaliana reference genome.</title>
        <authorList>
            <person name="Cheng C.Y."/>
            <person name="Krishnakumar V."/>
            <person name="Chan A.P."/>
            <person name="Thibaud-Nissen F."/>
            <person name="Schobel S."/>
            <person name="Town C.D."/>
        </authorList>
    </citation>
    <scope>GENOME REANNOTATION</scope>
    <source>
        <strain>cv. Columbia</strain>
    </source>
</reference>
<reference key="3">
    <citation type="submission" date="2009-03" db="EMBL/GenBank/DDBJ databases">
        <title>ORF cloning and analysis of Arabidopsis transcription factor genes.</title>
        <authorList>
            <person name="Fujita M."/>
            <person name="Mizukado S."/>
            <person name="Seki M."/>
            <person name="Shinozaki K."/>
            <person name="Mitsuda N."/>
            <person name="Takiguchi Y."/>
            <person name="Takagi M."/>
        </authorList>
    </citation>
    <scope>NUCLEOTIDE SEQUENCE [MRNA] OF 1-167</scope>
    <source>
        <strain>cv. Columbia</strain>
    </source>
</reference>
<reference key="4">
    <citation type="journal article" date="2003" name="Plant Cell">
        <title>Update on the basic helix-loop-helix transcription factor gene family in Arabidopsis thaliana.</title>
        <authorList>
            <person name="Bailey P.C."/>
            <person name="Martin C."/>
            <person name="Toledo-Ortiz G."/>
            <person name="Quail P.H."/>
            <person name="Huq E."/>
            <person name="Heim M.A."/>
            <person name="Jakoby M."/>
            <person name="Werber M."/>
            <person name="Weisshaar B."/>
        </authorList>
    </citation>
    <scope>GENE FAMILY</scope>
    <scope>NOMENCLATURE</scope>
</reference>
<organism>
    <name type="scientific">Arabidopsis thaliana</name>
    <name type="common">Mouse-ear cress</name>
    <dbReference type="NCBI Taxonomy" id="3702"/>
    <lineage>
        <taxon>Eukaryota</taxon>
        <taxon>Viridiplantae</taxon>
        <taxon>Streptophyta</taxon>
        <taxon>Embryophyta</taxon>
        <taxon>Tracheophyta</taxon>
        <taxon>Spermatophyta</taxon>
        <taxon>Magnoliopsida</taxon>
        <taxon>eudicotyledons</taxon>
        <taxon>Gunneridae</taxon>
        <taxon>Pentapetalae</taxon>
        <taxon>rosids</taxon>
        <taxon>malvids</taxon>
        <taxon>Brassicales</taxon>
        <taxon>Brassicaceae</taxon>
        <taxon>Camelineae</taxon>
        <taxon>Arabidopsis</taxon>
    </lineage>
</organism>
<evidence type="ECO:0000255" key="1">
    <source>
        <dbReference type="PROSITE-ProRule" id="PRU00981"/>
    </source>
</evidence>
<evidence type="ECO:0000256" key="2">
    <source>
        <dbReference type="SAM" id="MobiDB-lite"/>
    </source>
</evidence>
<evidence type="ECO:0000303" key="3">
    <source>
    </source>
</evidence>
<evidence type="ECO:0000305" key="4"/>
<evidence type="ECO:0000312" key="5">
    <source>
        <dbReference type="Araport" id="AT4G20970"/>
    </source>
</evidence>
<evidence type="ECO:0000312" key="6">
    <source>
        <dbReference type="EMBL" id="CAB45892.1"/>
    </source>
</evidence>
<proteinExistence type="evidence at protein level"/>
<protein>
    <recommendedName>
        <fullName>Transcription factor bHLH162</fullName>
    </recommendedName>
    <alternativeName>
        <fullName>Basic helix-loop-helix protein 162</fullName>
        <shortName evidence="3">AtbHLH162</shortName>
        <shortName>bHLH 162</shortName>
    </alternativeName>
    <alternativeName>
        <fullName>bHLH transcription factor bHLH162</fullName>
    </alternativeName>
</protein>
<accession>F4JIJ7</accession>
<accession>Q9SUB6</accession>
<dbReference type="EMBL" id="AL080282">
    <property type="protein sequence ID" value="CAB45892.1"/>
    <property type="status" value="ALT_SEQ"/>
    <property type="molecule type" value="Genomic_DNA"/>
</dbReference>
<dbReference type="EMBL" id="AL161554">
    <property type="protein sequence ID" value="CAB79097.1"/>
    <property type="status" value="ALT_SEQ"/>
    <property type="molecule type" value="Genomic_DNA"/>
</dbReference>
<dbReference type="EMBL" id="CP002687">
    <property type="protein sequence ID" value="AEE84380.1"/>
    <property type="molecule type" value="Genomic_DNA"/>
</dbReference>
<dbReference type="EMBL" id="AB493686">
    <property type="protein sequence ID" value="BAH30524.1"/>
    <property type="molecule type" value="mRNA"/>
</dbReference>
<dbReference type="PIR" id="T10639">
    <property type="entry name" value="T10639"/>
</dbReference>
<dbReference type="RefSeq" id="NP_193829.2">
    <property type="nucleotide sequence ID" value="NM_118215.3"/>
</dbReference>
<dbReference type="SMR" id="F4JIJ7"/>
<dbReference type="FunCoup" id="F4JIJ7">
    <property type="interactions" value="170"/>
</dbReference>
<dbReference type="IntAct" id="F4JIJ7">
    <property type="interactions" value="7"/>
</dbReference>
<dbReference type="STRING" id="3702.F4JIJ7"/>
<dbReference type="PaxDb" id="3702-AT4G20970.1"/>
<dbReference type="EnsemblPlants" id="AT4G20970.1">
    <property type="protein sequence ID" value="AT4G20970.1"/>
    <property type="gene ID" value="AT4G20970"/>
</dbReference>
<dbReference type="GeneID" id="827844"/>
<dbReference type="Gramene" id="AT4G20970.1">
    <property type="protein sequence ID" value="AT4G20970.1"/>
    <property type="gene ID" value="AT4G20970"/>
</dbReference>
<dbReference type="KEGG" id="ath:AT4G20970"/>
<dbReference type="Araport" id="AT4G20970"/>
<dbReference type="TAIR" id="AT4G20970"/>
<dbReference type="eggNOG" id="ENOG502RZNA">
    <property type="taxonomic scope" value="Eukaryota"/>
</dbReference>
<dbReference type="HOGENOM" id="CLU_083174_2_0_1"/>
<dbReference type="InParanoid" id="F4JIJ7"/>
<dbReference type="OMA" id="HIFHEEN"/>
<dbReference type="PRO" id="PR:F4JIJ7"/>
<dbReference type="Proteomes" id="UP000006548">
    <property type="component" value="Chromosome 4"/>
</dbReference>
<dbReference type="ExpressionAtlas" id="F4JIJ7">
    <property type="expression patterns" value="baseline and differential"/>
</dbReference>
<dbReference type="GO" id="GO:0005634">
    <property type="term" value="C:nucleus"/>
    <property type="evidence" value="ECO:0007669"/>
    <property type="project" value="UniProtKB-SubCell"/>
</dbReference>
<dbReference type="GO" id="GO:0003677">
    <property type="term" value="F:DNA binding"/>
    <property type="evidence" value="ECO:0007669"/>
    <property type="project" value="UniProtKB-KW"/>
</dbReference>
<dbReference type="GO" id="GO:0003700">
    <property type="term" value="F:DNA-binding transcription factor activity"/>
    <property type="evidence" value="ECO:0000250"/>
    <property type="project" value="TAIR"/>
</dbReference>
<dbReference type="GO" id="GO:0046983">
    <property type="term" value="F:protein dimerization activity"/>
    <property type="evidence" value="ECO:0007669"/>
    <property type="project" value="InterPro"/>
</dbReference>
<dbReference type="GO" id="GO:0050832">
    <property type="term" value="P:defense response to fungus"/>
    <property type="evidence" value="ECO:0000270"/>
    <property type="project" value="TAIR"/>
</dbReference>
<dbReference type="GO" id="GO:0006355">
    <property type="term" value="P:regulation of DNA-templated transcription"/>
    <property type="evidence" value="ECO:0000304"/>
    <property type="project" value="TAIR"/>
</dbReference>
<dbReference type="GO" id="GO:0006357">
    <property type="term" value="P:regulation of transcription by RNA polymerase II"/>
    <property type="evidence" value="ECO:0007669"/>
    <property type="project" value="InterPro"/>
</dbReference>
<dbReference type="CDD" id="cd18914">
    <property type="entry name" value="bHLH_AtORG2_like"/>
    <property type="match status" value="1"/>
</dbReference>
<dbReference type="FunFam" id="4.10.280.10:FF:000103">
    <property type="entry name" value="Transcription factor bHLH162"/>
    <property type="match status" value="1"/>
</dbReference>
<dbReference type="Gene3D" id="4.10.280.10">
    <property type="entry name" value="Helix-loop-helix DNA-binding domain"/>
    <property type="match status" value="1"/>
</dbReference>
<dbReference type="InterPro" id="IPR011598">
    <property type="entry name" value="bHLH_dom"/>
</dbReference>
<dbReference type="InterPro" id="IPR036638">
    <property type="entry name" value="HLH_DNA-bd_sf"/>
</dbReference>
<dbReference type="InterPro" id="IPR015660">
    <property type="entry name" value="MASH1/Ascl1a-like"/>
</dbReference>
<dbReference type="PANTHER" id="PTHR13935">
    <property type="entry name" value="ACHAETE-SCUTE TRANSCRIPTION FACTOR-RELATED"/>
    <property type="match status" value="1"/>
</dbReference>
<dbReference type="PANTHER" id="PTHR13935:SF90">
    <property type="entry name" value="TRANSCRIPTION FACTOR BHLH162"/>
    <property type="match status" value="1"/>
</dbReference>
<dbReference type="Pfam" id="PF00010">
    <property type="entry name" value="HLH"/>
    <property type="match status" value="1"/>
</dbReference>
<dbReference type="SMART" id="SM00353">
    <property type="entry name" value="HLH"/>
    <property type="match status" value="1"/>
</dbReference>
<dbReference type="SUPFAM" id="SSF47459">
    <property type="entry name" value="HLH, helix-loop-helix DNA-binding domain"/>
    <property type="match status" value="1"/>
</dbReference>
<dbReference type="PROSITE" id="PS50888">
    <property type="entry name" value="BHLH"/>
    <property type="match status" value="1"/>
</dbReference>
<gene>
    <name evidence="3" type="primary">BHLH162</name>
    <name evidence="5" type="ordered locus">At4g20970</name>
    <name evidence="6" type="ORF">T13K14.130</name>
</gene>
<feature type="chain" id="PRO_0000439394" description="Transcription factor bHLH162">
    <location>
        <begin position="1"/>
        <end position="190"/>
    </location>
</feature>
<feature type="domain" description="bHLH" evidence="1">
    <location>
        <begin position="11"/>
        <end position="63"/>
    </location>
</feature>
<feature type="region of interest" description="Disordered" evidence="2">
    <location>
        <begin position="1"/>
        <end position="21"/>
    </location>
</feature>
<feature type="compositionally biased region" description="Polar residues" evidence="2">
    <location>
        <begin position="1"/>
        <end position="12"/>
    </location>
</feature>
<keyword id="KW-0238">DNA-binding</keyword>
<keyword id="KW-0539">Nucleus</keyword>
<keyword id="KW-1185">Reference proteome</keyword>
<keyword id="KW-0804">Transcription</keyword>
<keyword id="KW-0805">Transcription regulation</keyword>
<name>BH162_ARATH</name>
<comment type="interaction">
    <interactant intactId="EBI-15191643">
        <id>F4JIJ7</id>
    </interactant>
    <interactant intactId="EBI-15195499">
        <id>Q9M128</id>
        <label>BHLH57</label>
    </interactant>
    <organismsDiffer>false</organismsDiffer>
    <experiments>3</experiments>
</comment>
<comment type="interaction">
    <interactant intactId="EBI-15191643">
        <id>F4JIJ7</id>
    </interactant>
    <interactant intactId="EBI-15192637">
        <id>Q9C7T4</id>
        <label>BHLH96</label>
    </interactant>
    <organismsDiffer>false</organismsDiffer>
    <experiments>4</experiments>
</comment>
<comment type="subcellular location">
    <subcellularLocation>
        <location evidence="1">Nucleus</location>
    </subcellularLocation>
</comment>
<comment type="similarity">
    <text evidence="4">Belongs to the bHLH protein family.</text>
</comment>
<comment type="sequence caution" evidence="4">
    <conflict type="erroneous gene model prediction">
        <sequence resource="EMBL-CDS" id="CAB45892"/>
    </conflict>
</comment>
<comment type="sequence caution" evidence="4">
    <conflict type="erroneous gene model prediction">
        <sequence resource="EMBL-CDS" id="CAB79097"/>
    </conflict>
</comment>
<sequence length="190" mass="21577">MEPSHSNTGQSRSVDRKTVEKNRRMQMKSLYSELISLLPHHSSTEPLTLPDQLDEAANYIKKLQVNVEKKRERKRNLVATTTLEKLNSVGSSSVSSSVDVSVPRKLPKIEIQETGSIFHIFLVTSLEHKFMFCEIIRVLTEELGAEITHAGYSIVDDAVFHTLHCKVEEHDYGARSQIPERLEKIVNSVH</sequence>